<name>ASNA_HAEIE</name>
<protein>
    <recommendedName>
        <fullName evidence="1">Aspartate--ammonia ligase</fullName>
        <ecNumber evidence="1">6.3.1.1</ecNumber>
    </recommendedName>
    <alternativeName>
        <fullName evidence="1">Asparagine synthetase A</fullName>
    </alternativeName>
</protein>
<organism>
    <name type="scientific">Haemophilus influenzae (strain PittEE)</name>
    <dbReference type="NCBI Taxonomy" id="374930"/>
    <lineage>
        <taxon>Bacteria</taxon>
        <taxon>Pseudomonadati</taxon>
        <taxon>Pseudomonadota</taxon>
        <taxon>Gammaproteobacteria</taxon>
        <taxon>Pasteurellales</taxon>
        <taxon>Pasteurellaceae</taxon>
        <taxon>Haemophilus</taxon>
    </lineage>
</organism>
<sequence length="330" mass="37422">MKKTFILQQQEISFVKNTFTQNLIEQLGIIEVQGPILSQVGNGMQDNLSGIEKAVQVNVKCIPNAVFEVVHSLAKWKRHTLARFNFKEDEGLFVHMKALRPDEDSLDPTHSVYVDQWDWEKVIPEGRRNFAYLKETVNSIYRAIRLTELAVEARFDIPSILPKQITFVHSEDLVKRYPDLSSKERENAICKEYGAVFLIGIGGKLSDGKPHDGRAPDYDDWTTESENGYKGLNGDILVWNDQLGKAFELSSMGIRVDQSALRLQAGLTGDEDRLKMDWHQDLLNGKLPLTIGGGIGQSRLAMLLLRKKHIGEVQSSVWPKEMLEEFSNIL</sequence>
<comment type="catalytic activity">
    <reaction evidence="1">
        <text>L-aspartate + NH4(+) + ATP = L-asparagine + AMP + diphosphate + H(+)</text>
        <dbReference type="Rhea" id="RHEA:11372"/>
        <dbReference type="ChEBI" id="CHEBI:15378"/>
        <dbReference type="ChEBI" id="CHEBI:28938"/>
        <dbReference type="ChEBI" id="CHEBI:29991"/>
        <dbReference type="ChEBI" id="CHEBI:30616"/>
        <dbReference type="ChEBI" id="CHEBI:33019"/>
        <dbReference type="ChEBI" id="CHEBI:58048"/>
        <dbReference type="ChEBI" id="CHEBI:456215"/>
        <dbReference type="EC" id="6.3.1.1"/>
    </reaction>
</comment>
<comment type="pathway">
    <text evidence="1">Amino-acid biosynthesis; L-asparagine biosynthesis; L-asparagine from L-aspartate (ammonia route): step 1/1.</text>
</comment>
<comment type="subcellular location">
    <subcellularLocation>
        <location evidence="1">Cytoplasm</location>
    </subcellularLocation>
</comment>
<comment type="similarity">
    <text evidence="1">Belongs to the class-II aminoacyl-tRNA synthetase family. AsnA subfamily.</text>
</comment>
<feature type="chain" id="PRO_1000017947" description="Aspartate--ammonia ligase">
    <location>
        <begin position="1"/>
        <end position="330"/>
    </location>
</feature>
<gene>
    <name evidence="1" type="primary">asnA</name>
    <name type="ordered locus">CGSHiEE_00160</name>
</gene>
<accession>A5U9S9</accession>
<proteinExistence type="inferred from homology"/>
<reference key="1">
    <citation type="journal article" date="2007" name="Genome Biol.">
        <title>Characterization and modeling of the Haemophilus influenzae core and supragenomes based on the complete genomic sequences of Rd and 12 clinical nontypeable strains.</title>
        <authorList>
            <person name="Hogg J.S."/>
            <person name="Hu F.Z."/>
            <person name="Janto B."/>
            <person name="Boissy R."/>
            <person name="Hayes J."/>
            <person name="Keefe R."/>
            <person name="Post J.C."/>
            <person name="Ehrlich G.D."/>
        </authorList>
    </citation>
    <scope>NUCLEOTIDE SEQUENCE [LARGE SCALE GENOMIC DNA]</scope>
    <source>
        <strain>PittEE</strain>
    </source>
</reference>
<dbReference type="EC" id="6.3.1.1" evidence="1"/>
<dbReference type="EMBL" id="CP000671">
    <property type="protein sequence ID" value="ABQ97530.1"/>
    <property type="molecule type" value="Genomic_DNA"/>
</dbReference>
<dbReference type="SMR" id="A5U9S9"/>
<dbReference type="KEGG" id="hip:CGSHiEE_00160"/>
<dbReference type="HOGENOM" id="CLU_071543_0_0_6"/>
<dbReference type="UniPathway" id="UPA00134">
    <property type="reaction ID" value="UER00194"/>
</dbReference>
<dbReference type="GO" id="GO:0005829">
    <property type="term" value="C:cytosol"/>
    <property type="evidence" value="ECO:0007669"/>
    <property type="project" value="TreeGrafter"/>
</dbReference>
<dbReference type="GO" id="GO:0004071">
    <property type="term" value="F:aspartate-ammonia ligase activity"/>
    <property type="evidence" value="ECO:0007669"/>
    <property type="project" value="UniProtKB-UniRule"/>
</dbReference>
<dbReference type="GO" id="GO:0005524">
    <property type="term" value="F:ATP binding"/>
    <property type="evidence" value="ECO:0007669"/>
    <property type="project" value="UniProtKB-UniRule"/>
</dbReference>
<dbReference type="GO" id="GO:0070981">
    <property type="term" value="P:L-asparagine biosynthetic process"/>
    <property type="evidence" value="ECO:0007669"/>
    <property type="project" value="UniProtKB-UniRule"/>
</dbReference>
<dbReference type="Gene3D" id="3.30.930.10">
    <property type="entry name" value="Bira Bifunctional Protein, Domain 2"/>
    <property type="match status" value="1"/>
</dbReference>
<dbReference type="HAMAP" id="MF_00555">
    <property type="entry name" value="AsnA"/>
    <property type="match status" value="1"/>
</dbReference>
<dbReference type="InterPro" id="IPR006195">
    <property type="entry name" value="aa-tRNA-synth_II"/>
</dbReference>
<dbReference type="InterPro" id="IPR045864">
    <property type="entry name" value="aa-tRNA-synth_II/BPL/LPL"/>
</dbReference>
<dbReference type="InterPro" id="IPR004618">
    <property type="entry name" value="AsnA"/>
</dbReference>
<dbReference type="NCBIfam" id="TIGR00669">
    <property type="entry name" value="asnA"/>
    <property type="match status" value="1"/>
</dbReference>
<dbReference type="PANTHER" id="PTHR30073">
    <property type="entry name" value="ASPARTATE--AMMONIA LIGASE"/>
    <property type="match status" value="1"/>
</dbReference>
<dbReference type="PANTHER" id="PTHR30073:SF5">
    <property type="entry name" value="ASPARTATE--AMMONIA LIGASE"/>
    <property type="match status" value="1"/>
</dbReference>
<dbReference type="Pfam" id="PF03590">
    <property type="entry name" value="AsnA"/>
    <property type="match status" value="1"/>
</dbReference>
<dbReference type="PIRSF" id="PIRSF001555">
    <property type="entry name" value="Asp_ammon_ligase"/>
    <property type="match status" value="1"/>
</dbReference>
<dbReference type="SUPFAM" id="SSF55681">
    <property type="entry name" value="Class II aaRS and biotin synthetases"/>
    <property type="match status" value="1"/>
</dbReference>
<dbReference type="PROSITE" id="PS50862">
    <property type="entry name" value="AA_TRNA_LIGASE_II"/>
    <property type="match status" value="1"/>
</dbReference>
<keyword id="KW-0028">Amino-acid biosynthesis</keyword>
<keyword id="KW-0061">Asparagine biosynthesis</keyword>
<keyword id="KW-0067">ATP-binding</keyword>
<keyword id="KW-0963">Cytoplasm</keyword>
<keyword id="KW-0436">Ligase</keyword>
<keyword id="KW-0547">Nucleotide-binding</keyword>
<evidence type="ECO:0000255" key="1">
    <source>
        <dbReference type="HAMAP-Rule" id="MF_00555"/>
    </source>
</evidence>